<comment type="subcellular location">
    <subcellularLocation>
        <location evidence="3">Mitochondrion</location>
    </subcellularLocation>
</comment>
<comment type="miscellaneous">
    <text evidence="2">Present with 3480 molecules/cell in log phase SD medium.</text>
</comment>
<comment type="similarity">
    <text evidence="4">Belongs to the CCR4/nocturin family.</text>
</comment>
<proteinExistence type="evidence at protein level"/>
<feature type="transit peptide" description="Mitochondrion" evidence="1">
    <location>
        <begin position="1"/>
        <end position="23"/>
    </location>
</feature>
<feature type="chain" id="PRO_0000218578" description="RNA exonuclease NGL1">
    <location>
        <begin position="24"/>
        <end position="363"/>
    </location>
</feature>
<protein>
    <recommendedName>
        <fullName>RNA exonuclease NGL1</fullName>
        <ecNumber>3.1.-.-</ecNumber>
    </recommendedName>
</protein>
<gene>
    <name type="primary">NGL1</name>
    <name type="ordered locus">YOL042W</name>
</gene>
<organism>
    <name type="scientific">Saccharomyces cerevisiae (strain ATCC 204508 / S288c)</name>
    <name type="common">Baker's yeast</name>
    <dbReference type="NCBI Taxonomy" id="559292"/>
    <lineage>
        <taxon>Eukaryota</taxon>
        <taxon>Fungi</taxon>
        <taxon>Dikarya</taxon>
        <taxon>Ascomycota</taxon>
        <taxon>Saccharomycotina</taxon>
        <taxon>Saccharomycetes</taxon>
        <taxon>Saccharomycetales</taxon>
        <taxon>Saccharomycetaceae</taxon>
        <taxon>Saccharomyces</taxon>
    </lineage>
</organism>
<dbReference type="EC" id="3.1.-.-"/>
<dbReference type="EMBL" id="Z74784">
    <property type="protein sequence ID" value="CAA99044.1"/>
    <property type="molecule type" value="Genomic_DNA"/>
</dbReference>
<dbReference type="EMBL" id="AY693067">
    <property type="protein sequence ID" value="AAT93086.1"/>
    <property type="molecule type" value="Genomic_DNA"/>
</dbReference>
<dbReference type="EMBL" id="BK006948">
    <property type="protein sequence ID" value="DAA10740.1"/>
    <property type="molecule type" value="Genomic_DNA"/>
</dbReference>
<dbReference type="PIR" id="S66727">
    <property type="entry name" value="S66727"/>
</dbReference>
<dbReference type="RefSeq" id="NP_014600.1">
    <property type="nucleotide sequence ID" value="NM_001183296.1"/>
</dbReference>
<dbReference type="SMR" id="Q08213"/>
<dbReference type="BioGRID" id="34360">
    <property type="interactions" value="85"/>
</dbReference>
<dbReference type="DIP" id="DIP-4236N"/>
<dbReference type="FunCoup" id="Q08213">
    <property type="interactions" value="101"/>
</dbReference>
<dbReference type="IntAct" id="Q08213">
    <property type="interactions" value="2"/>
</dbReference>
<dbReference type="STRING" id="4932.YOL042W"/>
<dbReference type="PaxDb" id="4932-YOL042W"/>
<dbReference type="PeptideAtlas" id="Q08213"/>
<dbReference type="EnsemblFungi" id="YOL042W_mRNA">
    <property type="protein sequence ID" value="YOL042W"/>
    <property type="gene ID" value="YOL042W"/>
</dbReference>
<dbReference type="GeneID" id="854115"/>
<dbReference type="KEGG" id="sce:YOL042W"/>
<dbReference type="AGR" id="SGD:S000005402"/>
<dbReference type="SGD" id="S000005402">
    <property type="gene designation" value="NGL1"/>
</dbReference>
<dbReference type="VEuPathDB" id="FungiDB:YOL042W"/>
<dbReference type="eggNOG" id="KOG0620">
    <property type="taxonomic scope" value="Eukaryota"/>
</dbReference>
<dbReference type="HOGENOM" id="CLU_858445_0_0_1"/>
<dbReference type="InParanoid" id="Q08213"/>
<dbReference type="OMA" id="QVYTYVP"/>
<dbReference type="OrthoDB" id="428734at2759"/>
<dbReference type="BioCyc" id="YEAST:G3O-33456-MONOMER"/>
<dbReference type="BioGRID-ORCS" id="854115">
    <property type="hits" value="0 hits in 10 CRISPR screens"/>
</dbReference>
<dbReference type="PRO" id="PR:Q08213"/>
<dbReference type="Proteomes" id="UP000002311">
    <property type="component" value="Chromosome XV"/>
</dbReference>
<dbReference type="RNAct" id="Q08213">
    <property type="molecule type" value="protein"/>
</dbReference>
<dbReference type="GO" id="GO:0005739">
    <property type="term" value="C:mitochondrion"/>
    <property type="evidence" value="ECO:0007005"/>
    <property type="project" value="SGD"/>
</dbReference>
<dbReference type="GO" id="GO:0000175">
    <property type="term" value="F:3'-5'-RNA exonuclease activity"/>
    <property type="evidence" value="ECO:0000318"/>
    <property type="project" value="GO_Central"/>
</dbReference>
<dbReference type="GO" id="GO:0004519">
    <property type="term" value="F:endonuclease activity"/>
    <property type="evidence" value="ECO:0000250"/>
    <property type="project" value="SGD"/>
</dbReference>
<dbReference type="FunFam" id="3.60.10.10:FF:000087">
    <property type="entry name" value="Ngl1p"/>
    <property type="match status" value="1"/>
</dbReference>
<dbReference type="Gene3D" id="3.60.10.10">
    <property type="entry name" value="Endonuclease/exonuclease/phosphatase"/>
    <property type="match status" value="1"/>
</dbReference>
<dbReference type="InterPro" id="IPR050410">
    <property type="entry name" value="CCR4/nocturin_mRNA_transcr"/>
</dbReference>
<dbReference type="InterPro" id="IPR036691">
    <property type="entry name" value="Endo/exonu/phosph_ase_sf"/>
</dbReference>
<dbReference type="InterPro" id="IPR005135">
    <property type="entry name" value="Endo/exonuclease/phosphatase"/>
</dbReference>
<dbReference type="PANTHER" id="PTHR12121">
    <property type="entry name" value="CARBON CATABOLITE REPRESSOR PROTEIN 4"/>
    <property type="match status" value="1"/>
</dbReference>
<dbReference type="PANTHER" id="PTHR12121:SF11">
    <property type="entry name" value="RNA EXONUCLEASE NGL1"/>
    <property type="match status" value="1"/>
</dbReference>
<dbReference type="Pfam" id="PF03372">
    <property type="entry name" value="Exo_endo_phos"/>
    <property type="match status" value="1"/>
</dbReference>
<dbReference type="SUPFAM" id="SSF56219">
    <property type="entry name" value="DNase I-like"/>
    <property type="match status" value="1"/>
</dbReference>
<sequence length="363" mass="42398">MFTRRFIPVVQSTKQNIGKYVRKDARFTLLTYNMLSPSYMWPQVYTYVAEPYKNWSYRHRLLEKELLNTFKADIMCLQEMTARDYEDYWHDSIGVDVNYGSKFISKTPPKYWKKPVKDMDGVSIFYNLAKFDFISSSGIYLNQLLNVFNQRELKYLYNKKVTLTDGASNVIGEDSLLDVLKGKNQVCLFVSLRHKETGTIFVVLNTHLYWKYDEVKLTQCMIIMRELSKIIKQLLPGDVKGQERVKILFTGDLNSTRDSLVVNFLQGQIVSHGDLNLINPMRPYLDRCVYDDIPKDYFVHTCYSGKLKGIFDYVWYHDSDFLLTKILTGNEVSDELLASNQLGLPNENHPSDHIPLLTEFKIL</sequence>
<accession>Q08213</accession>
<accession>D6W224</accession>
<name>NGL1_YEAST</name>
<reference key="1">
    <citation type="journal article" date="1997" name="Nature">
        <title>The nucleotide sequence of Saccharomyces cerevisiae chromosome XV.</title>
        <authorList>
            <person name="Dujon B."/>
            <person name="Albermann K."/>
            <person name="Aldea M."/>
            <person name="Alexandraki D."/>
            <person name="Ansorge W."/>
            <person name="Arino J."/>
            <person name="Benes V."/>
            <person name="Bohn C."/>
            <person name="Bolotin-Fukuhara M."/>
            <person name="Bordonne R."/>
            <person name="Boyer J."/>
            <person name="Camasses A."/>
            <person name="Casamayor A."/>
            <person name="Casas C."/>
            <person name="Cheret G."/>
            <person name="Cziepluch C."/>
            <person name="Daignan-Fornier B."/>
            <person name="Dang V.-D."/>
            <person name="de Haan M."/>
            <person name="Delius H."/>
            <person name="Durand P."/>
            <person name="Fairhead C."/>
            <person name="Feldmann H."/>
            <person name="Gaillon L."/>
            <person name="Galisson F."/>
            <person name="Gamo F.-J."/>
            <person name="Gancedo C."/>
            <person name="Goffeau A."/>
            <person name="Goulding S.E."/>
            <person name="Grivell L.A."/>
            <person name="Habbig B."/>
            <person name="Hand N.J."/>
            <person name="Hani J."/>
            <person name="Hattenhorst U."/>
            <person name="Hebling U."/>
            <person name="Hernando Y."/>
            <person name="Herrero E."/>
            <person name="Heumann K."/>
            <person name="Hiesel R."/>
            <person name="Hilger F."/>
            <person name="Hofmann B."/>
            <person name="Hollenberg C.P."/>
            <person name="Hughes B."/>
            <person name="Jauniaux J.-C."/>
            <person name="Kalogeropoulos A."/>
            <person name="Katsoulou C."/>
            <person name="Kordes E."/>
            <person name="Lafuente M.J."/>
            <person name="Landt O."/>
            <person name="Louis E.J."/>
            <person name="Maarse A.C."/>
            <person name="Madania A."/>
            <person name="Mannhaupt G."/>
            <person name="Marck C."/>
            <person name="Martin R.P."/>
            <person name="Mewes H.-W."/>
            <person name="Michaux G."/>
            <person name="Paces V."/>
            <person name="Parle-McDermott A.G."/>
            <person name="Pearson B.M."/>
            <person name="Perrin A."/>
            <person name="Pettersson B."/>
            <person name="Poch O."/>
            <person name="Pohl T.M."/>
            <person name="Poirey R."/>
            <person name="Portetelle D."/>
            <person name="Pujol A."/>
            <person name="Purnelle B."/>
            <person name="Ramezani Rad M."/>
            <person name="Rechmann S."/>
            <person name="Schwager C."/>
            <person name="Schweizer M."/>
            <person name="Sor F."/>
            <person name="Sterky F."/>
            <person name="Tarassov I.A."/>
            <person name="Teodoru C."/>
            <person name="Tettelin H."/>
            <person name="Thierry A."/>
            <person name="Tobiasch E."/>
            <person name="Tzermia M."/>
            <person name="Uhlen M."/>
            <person name="Unseld M."/>
            <person name="Valens M."/>
            <person name="Vandenbol M."/>
            <person name="Vetter I."/>
            <person name="Vlcek C."/>
            <person name="Voet M."/>
            <person name="Volckaert G."/>
            <person name="Voss H."/>
            <person name="Wambutt R."/>
            <person name="Wedler H."/>
            <person name="Wiemann S."/>
            <person name="Winsor B."/>
            <person name="Wolfe K.H."/>
            <person name="Zollner A."/>
            <person name="Zumstein E."/>
            <person name="Kleine K."/>
        </authorList>
    </citation>
    <scope>NUCLEOTIDE SEQUENCE [LARGE SCALE GENOMIC DNA]</scope>
    <source>
        <strain>ATCC 204508 / S288c</strain>
    </source>
</reference>
<reference key="2">
    <citation type="journal article" date="2014" name="G3 (Bethesda)">
        <title>The reference genome sequence of Saccharomyces cerevisiae: Then and now.</title>
        <authorList>
            <person name="Engel S.R."/>
            <person name="Dietrich F.S."/>
            <person name="Fisk D.G."/>
            <person name="Binkley G."/>
            <person name="Balakrishnan R."/>
            <person name="Costanzo M.C."/>
            <person name="Dwight S.S."/>
            <person name="Hitz B.C."/>
            <person name="Karra K."/>
            <person name="Nash R.S."/>
            <person name="Weng S."/>
            <person name="Wong E.D."/>
            <person name="Lloyd P."/>
            <person name="Skrzypek M.S."/>
            <person name="Miyasato S.R."/>
            <person name="Simison M."/>
            <person name="Cherry J.M."/>
        </authorList>
    </citation>
    <scope>GENOME REANNOTATION</scope>
    <source>
        <strain>ATCC 204508 / S288c</strain>
    </source>
</reference>
<reference key="3">
    <citation type="journal article" date="2007" name="Genome Res.">
        <title>Approaching a complete repository of sequence-verified protein-encoding clones for Saccharomyces cerevisiae.</title>
        <authorList>
            <person name="Hu Y."/>
            <person name="Rolfs A."/>
            <person name="Bhullar B."/>
            <person name="Murthy T.V.S."/>
            <person name="Zhu C."/>
            <person name="Berger M.F."/>
            <person name="Camargo A.A."/>
            <person name="Kelley F."/>
            <person name="McCarron S."/>
            <person name="Jepson D."/>
            <person name="Richardson A."/>
            <person name="Raphael J."/>
            <person name="Moreira D."/>
            <person name="Taycher E."/>
            <person name="Zuo D."/>
            <person name="Mohr S."/>
            <person name="Kane M.F."/>
            <person name="Williamson J."/>
            <person name="Simpson A.J.G."/>
            <person name="Bulyk M.L."/>
            <person name="Harlow E."/>
            <person name="Marsischky G."/>
            <person name="Kolodner R.D."/>
            <person name="LaBaer J."/>
        </authorList>
    </citation>
    <scope>NUCLEOTIDE SEQUENCE [GENOMIC DNA]</scope>
    <source>
        <strain>ATCC 204508 / S288c</strain>
    </source>
</reference>
<reference key="4">
    <citation type="journal article" date="2003" name="Nature">
        <title>Global analysis of protein expression in yeast.</title>
        <authorList>
            <person name="Ghaemmaghami S."/>
            <person name="Huh W.-K."/>
            <person name="Bower K."/>
            <person name="Howson R.W."/>
            <person name="Belle A."/>
            <person name="Dephoure N."/>
            <person name="O'Shea E.K."/>
            <person name="Weissman J.S."/>
        </authorList>
    </citation>
    <scope>LEVEL OF PROTEIN EXPRESSION [LARGE SCALE ANALYSIS]</scope>
</reference>
<reference key="5">
    <citation type="journal article" date="2006" name="J. Proteome Res.">
        <title>Toward the complete yeast mitochondrial proteome: multidimensional separation techniques for mitochondrial proteomics.</title>
        <authorList>
            <person name="Reinders J."/>
            <person name="Zahedi R.P."/>
            <person name="Pfanner N."/>
            <person name="Meisinger C."/>
            <person name="Sickmann A."/>
        </authorList>
    </citation>
    <scope>SUBCELLULAR LOCATION [LARGE SCALE ANALYSIS]</scope>
    <scope>IDENTIFICATION BY MASS SPECTROMETRY</scope>
</reference>
<keyword id="KW-0269">Exonuclease</keyword>
<keyword id="KW-0378">Hydrolase</keyword>
<keyword id="KW-0496">Mitochondrion</keyword>
<keyword id="KW-0540">Nuclease</keyword>
<keyword id="KW-1185">Reference proteome</keyword>
<keyword id="KW-0809">Transit peptide</keyword>
<evidence type="ECO:0000255" key="1"/>
<evidence type="ECO:0000269" key="2">
    <source>
    </source>
</evidence>
<evidence type="ECO:0000269" key="3">
    <source>
    </source>
</evidence>
<evidence type="ECO:0000305" key="4"/>